<evidence type="ECO:0000255" key="1">
    <source>
        <dbReference type="HAMAP-Rule" id="MF_01839"/>
    </source>
</evidence>
<dbReference type="EMBL" id="CP000948">
    <property type="protein sequence ID" value="ACB04691.1"/>
    <property type="molecule type" value="Genomic_DNA"/>
</dbReference>
<dbReference type="RefSeq" id="WP_000818601.1">
    <property type="nucleotide sequence ID" value="NC_010473.1"/>
</dbReference>
<dbReference type="SMR" id="B1X975"/>
<dbReference type="GeneID" id="93778356"/>
<dbReference type="KEGG" id="ecd:ECDH10B_3823"/>
<dbReference type="HOGENOM" id="CLU_069356_5_0_6"/>
<dbReference type="GO" id="GO:0043590">
    <property type="term" value="C:bacterial nucleoid"/>
    <property type="evidence" value="ECO:0007669"/>
    <property type="project" value="UniProtKB-UniRule"/>
</dbReference>
<dbReference type="GO" id="GO:0005737">
    <property type="term" value="C:cytoplasm"/>
    <property type="evidence" value="ECO:0007669"/>
    <property type="project" value="UniProtKB-UniRule"/>
</dbReference>
<dbReference type="GO" id="GO:0003700">
    <property type="term" value="F:DNA-binding transcription factor activity"/>
    <property type="evidence" value="ECO:0007669"/>
    <property type="project" value="TreeGrafter"/>
</dbReference>
<dbReference type="GO" id="GO:0000976">
    <property type="term" value="F:transcription cis-regulatory region binding"/>
    <property type="evidence" value="ECO:0007669"/>
    <property type="project" value="TreeGrafter"/>
</dbReference>
<dbReference type="GO" id="GO:0051301">
    <property type="term" value="P:cell division"/>
    <property type="evidence" value="ECO:0007669"/>
    <property type="project" value="UniProtKB-KW"/>
</dbReference>
<dbReference type="GO" id="GO:0010974">
    <property type="term" value="P:negative regulation of division septum assembly"/>
    <property type="evidence" value="ECO:0007669"/>
    <property type="project" value="InterPro"/>
</dbReference>
<dbReference type="FunFam" id="1.10.357.10:FF:000002">
    <property type="entry name" value="Nucleoid occlusion factor SlmA"/>
    <property type="match status" value="1"/>
</dbReference>
<dbReference type="Gene3D" id="1.10.357.10">
    <property type="entry name" value="Tetracycline Repressor, domain 2"/>
    <property type="match status" value="1"/>
</dbReference>
<dbReference type="HAMAP" id="MF_01839">
    <property type="entry name" value="NO_factor_SlmA"/>
    <property type="match status" value="1"/>
</dbReference>
<dbReference type="InterPro" id="IPR023772">
    <property type="entry name" value="DNA-bd_HTH_TetR-type_CS"/>
</dbReference>
<dbReference type="InterPro" id="IPR009057">
    <property type="entry name" value="Homeodomain-like_sf"/>
</dbReference>
<dbReference type="InterPro" id="IPR050109">
    <property type="entry name" value="HTH-type_TetR-like_transc_reg"/>
</dbReference>
<dbReference type="InterPro" id="IPR001647">
    <property type="entry name" value="HTH_TetR"/>
</dbReference>
<dbReference type="InterPro" id="IPR023769">
    <property type="entry name" value="NO_SlmA"/>
</dbReference>
<dbReference type="InterPro" id="IPR054580">
    <property type="entry name" value="SlmA-like_C"/>
</dbReference>
<dbReference type="InterPro" id="IPR036271">
    <property type="entry name" value="Tet_transcr_reg_TetR-rel_C_sf"/>
</dbReference>
<dbReference type="NCBIfam" id="NF007015">
    <property type="entry name" value="PRK09480.1"/>
    <property type="match status" value="1"/>
</dbReference>
<dbReference type="PANTHER" id="PTHR30055">
    <property type="entry name" value="HTH-TYPE TRANSCRIPTIONAL REGULATOR RUTR"/>
    <property type="match status" value="1"/>
</dbReference>
<dbReference type="PANTHER" id="PTHR30055:SF183">
    <property type="entry name" value="NUCLEOID OCCLUSION FACTOR SLMA"/>
    <property type="match status" value="1"/>
</dbReference>
<dbReference type="Pfam" id="PF22276">
    <property type="entry name" value="SlmA-like_C"/>
    <property type="match status" value="1"/>
</dbReference>
<dbReference type="Pfam" id="PF00440">
    <property type="entry name" value="TetR_N"/>
    <property type="match status" value="1"/>
</dbReference>
<dbReference type="SUPFAM" id="SSF46689">
    <property type="entry name" value="Homeodomain-like"/>
    <property type="match status" value="1"/>
</dbReference>
<dbReference type="SUPFAM" id="SSF48498">
    <property type="entry name" value="Tetracyclin repressor-like, C-terminal domain"/>
    <property type="match status" value="1"/>
</dbReference>
<dbReference type="PROSITE" id="PS01081">
    <property type="entry name" value="HTH_TETR_1"/>
    <property type="match status" value="1"/>
</dbReference>
<dbReference type="PROSITE" id="PS50977">
    <property type="entry name" value="HTH_TETR_2"/>
    <property type="match status" value="1"/>
</dbReference>
<comment type="function">
    <text evidence="1">Required for nucleoid occlusion (NO) phenomenon, which prevents Z-ring formation and cell division over the nucleoid. Acts as a DNA-associated cell division inhibitor that binds simultaneously chromosomal DNA and FtsZ, and disrupts the assembly of FtsZ polymers. SlmA-DNA-binding sequences (SBS) are dispersed on non-Ter regions of the chromosome, preventing FtsZ polymerization at these regions.</text>
</comment>
<comment type="subunit">
    <text evidence="1">Homodimer. Interacts with FtsZ.</text>
</comment>
<comment type="subcellular location">
    <subcellularLocation>
        <location evidence="1">Cytoplasm</location>
        <location evidence="1">Nucleoid</location>
    </subcellularLocation>
</comment>
<comment type="similarity">
    <text evidence="1">Belongs to the nucleoid occlusion factor SlmA family.</text>
</comment>
<name>SLMA_ECODH</name>
<gene>
    <name evidence="1" type="primary">slmA</name>
    <name type="ordered locus">ECDH10B_3823</name>
</gene>
<keyword id="KW-0131">Cell cycle</keyword>
<keyword id="KW-0132">Cell division</keyword>
<keyword id="KW-0175">Coiled coil</keyword>
<keyword id="KW-0963">Cytoplasm</keyword>
<keyword id="KW-0238">DNA-binding</keyword>
<accession>B1X975</accession>
<feature type="chain" id="PRO_1000188385" description="Nucleoid occlusion factor SlmA">
    <location>
        <begin position="1"/>
        <end position="198"/>
    </location>
</feature>
<feature type="domain" description="HTH tetR-type" evidence="1">
    <location>
        <begin position="10"/>
        <end position="70"/>
    </location>
</feature>
<feature type="DNA-binding region" description="H-T-H motif" evidence="1">
    <location>
        <begin position="33"/>
        <end position="52"/>
    </location>
</feature>
<feature type="coiled-coil region" evidence="1">
    <location>
        <begin position="117"/>
        <end position="144"/>
    </location>
</feature>
<proteinExistence type="inferred from homology"/>
<organism>
    <name type="scientific">Escherichia coli (strain K12 / DH10B)</name>
    <dbReference type="NCBI Taxonomy" id="316385"/>
    <lineage>
        <taxon>Bacteria</taxon>
        <taxon>Pseudomonadati</taxon>
        <taxon>Pseudomonadota</taxon>
        <taxon>Gammaproteobacteria</taxon>
        <taxon>Enterobacterales</taxon>
        <taxon>Enterobacteriaceae</taxon>
        <taxon>Escherichia</taxon>
    </lineage>
</organism>
<protein>
    <recommendedName>
        <fullName evidence="1">Nucleoid occlusion factor SlmA</fullName>
    </recommendedName>
</protein>
<sequence length="198" mass="22836">MAEKQTAKRNRREEILQSLALMLESSDGSQRITTAKLAASVGVSEAALYRHFPSKTRMFDSLIEFIEDSLITRINLILKDEKDTTARLRLIVLLLLGFGERNPGLTRILTGHALMFEQDRLQGRINQLFERIEAQLRQVLREKRMREGEGYTTDETLLASQILAFCEGMLSRFVRSEFKYRPTDDFDARWPLIAAQLQ</sequence>
<reference key="1">
    <citation type="journal article" date="2008" name="J. Bacteriol.">
        <title>The complete genome sequence of Escherichia coli DH10B: insights into the biology of a laboratory workhorse.</title>
        <authorList>
            <person name="Durfee T."/>
            <person name="Nelson R."/>
            <person name="Baldwin S."/>
            <person name="Plunkett G. III"/>
            <person name="Burland V."/>
            <person name="Mau B."/>
            <person name="Petrosino J.F."/>
            <person name="Qin X."/>
            <person name="Muzny D.M."/>
            <person name="Ayele M."/>
            <person name="Gibbs R.A."/>
            <person name="Csorgo B."/>
            <person name="Posfai G."/>
            <person name="Weinstock G.M."/>
            <person name="Blattner F.R."/>
        </authorList>
    </citation>
    <scope>NUCLEOTIDE SEQUENCE [LARGE SCALE GENOMIC DNA]</scope>
    <source>
        <strain>K12 / DH10B</strain>
    </source>
</reference>